<protein>
    <recommendedName>
        <fullName evidence="1">Enolase</fullName>
        <ecNumber evidence="1">4.2.1.11</ecNumber>
    </recommendedName>
    <alternativeName>
        <fullName evidence="1">2-phospho-D-glycerate hydro-lyase</fullName>
    </alternativeName>
    <alternativeName>
        <fullName evidence="1">2-phosphoglycerate dehydratase</fullName>
    </alternativeName>
</protein>
<name>ENO_SHEPW</name>
<organism>
    <name type="scientific">Shewanella piezotolerans (strain WP3 / JCM 13877)</name>
    <dbReference type="NCBI Taxonomy" id="225849"/>
    <lineage>
        <taxon>Bacteria</taxon>
        <taxon>Pseudomonadati</taxon>
        <taxon>Pseudomonadota</taxon>
        <taxon>Gammaproteobacteria</taxon>
        <taxon>Alteromonadales</taxon>
        <taxon>Shewanellaceae</taxon>
        <taxon>Shewanella</taxon>
    </lineage>
</organism>
<dbReference type="EC" id="4.2.1.11" evidence="1"/>
<dbReference type="EMBL" id="CP000472">
    <property type="protein sequence ID" value="ACJ28143.1"/>
    <property type="molecule type" value="Genomic_DNA"/>
</dbReference>
<dbReference type="RefSeq" id="WP_020911521.1">
    <property type="nucleotide sequence ID" value="NC_011566.1"/>
</dbReference>
<dbReference type="SMR" id="B8CJP6"/>
<dbReference type="STRING" id="225849.swp_1356"/>
<dbReference type="KEGG" id="swp:swp_1356"/>
<dbReference type="eggNOG" id="COG0148">
    <property type="taxonomic scope" value="Bacteria"/>
</dbReference>
<dbReference type="HOGENOM" id="CLU_031223_2_1_6"/>
<dbReference type="OrthoDB" id="9804716at2"/>
<dbReference type="UniPathway" id="UPA00109">
    <property type="reaction ID" value="UER00187"/>
</dbReference>
<dbReference type="Proteomes" id="UP000000753">
    <property type="component" value="Chromosome"/>
</dbReference>
<dbReference type="GO" id="GO:0009986">
    <property type="term" value="C:cell surface"/>
    <property type="evidence" value="ECO:0007669"/>
    <property type="project" value="UniProtKB-SubCell"/>
</dbReference>
<dbReference type="GO" id="GO:0005576">
    <property type="term" value="C:extracellular region"/>
    <property type="evidence" value="ECO:0007669"/>
    <property type="project" value="UniProtKB-SubCell"/>
</dbReference>
<dbReference type="GO" id="GO:0000015">
    <property type="term" value="C:phosphopyruvate hydratase complex"/>
    <property type="evidence" value="ECO:0007669"/>
    <property type="project" value="InterPro"/>
</dbReference>
<dbReference type="GO" id="GO:0000287">
    <property type="term" value="F:magnesium ion binding"/>
    <property type="evidence" value="ECO:0007669"/>
    <property type="project" value="UniProtKB-UniRule"/>
</dbReference>
<dbReference type="GO" id="GO:0004634">
    <property type="term" value="F:phosphopyruvate hydratase activity"/>
    <property type="evidence" value="ECO:0007669"/>
    <property type="project" value="UniProtKB-UniRule"/>
</dbReference>
<dbReference type="GO" id="GO:0006096">
    <property type="term" value="P:glycolytic process"/>
    <property type="evidence" value="ECO:0007669"/>
    <property type="project" value="UniProtKB-UniRule"/>
</dbReference>
<dbReference type="CDD" id="cd03313">
    <property type="entry name" value="enolase"/>
    <property type="match status" value="1"/>
</dbReference>
<dbReference type="FunFam" id="3.20.20.120:FF:000001">
    <property type="entry name" value="Enolase"/>
    <property type="match status" value="1"/>
</dbReference>
<dbReference type="FunFam" id="3.30.390.10:FF:000001">
    <property type="entry name" value="Enolase"/>
    <property type="match status" value="1"/>
</dbReference>
<dbReference type="Gene3D" id="3.20.20.120">
    <property type="entry name" value="Enolase-like C-terminal domain"/>
    <property type="match status" value="1"/>
</dbReference>
<dbReference type="Gene3D" id="3.30.390.10">
    <property type="entry name" value="Enolase-like, N-terminal domain"/>
    <property type="match status" value="1"/>
</dbReference>
<dbReference type="HAMAP" id="MF_00318">
    <property type="entry name" value="Enolase"/>
    <property type="match status" value="1"/>
</dbReference>
<dbReference type="InterPro" id="IPR000941">
    <property type="entry name" value="Enolase"/>
</dbReference>
<dbReference type="InterPro" id="IPR036849">
    <property type="entry name" value="Enolase-like_C_sf"/>
</dbReference>
<dbReference type="InterPro" id="IPR029017">
    <property type="entry name" value="Enolase-like_N"/>
</dbReference>
<dbReference type="InterPro" id="IPR020810">
    <property type="entry name" value="Enolase_C"/>
</dbReference>
<dbReference type="InterPro" id="IPR020809">
    <property type="entry name" value="Enolase_CS"/>
</dbReference>
<dbReference type="InterPro" id="IPR020811">
    <property type="entry name" value="Enolase_N"/>
</dbReference>
<dbReference type="NCBIfam" id="TIGR01060">
    <property type="entry name" value="eno"/>
    <property type="match status" value="1"/>
</dbReference>
<dbReference type="PANTHER" id="PTHR11902">
    <property type="entry name" value="ENOLASE"/>
    <property type="match status" value="1"/>
</dbReference>
<dbReference type="PANTHER" id="PTHR11902:SF1">
    <property type="entry name" value="ENOLASE"/>
    <property type="match status" value="1"/>
</dbReference>
<dbReference type="Pfam" id="PF00113">
    <property type="entry name" value="Enolase_C"/>
    <property type="match status" value="1"/>
</dbReference>
<dbReference type="Pfam" id="PF03952">
    <property type="entry name" value="Enolase_N"/>
    <property type="match status" value="1"/>
</dbReference>
<dbReference type="PIRSF" id="PIRSF001400">
    <property type="entry name" value="Enolase"/>
    <property type="match status" value="1"/>
</dbReference>
<dbReference type="PRINTS" id="PR00148">
    <property type="entry name" value="ENOLASE"/>
</dbReference>
<dbReference type="SFLD" id="SFLDF00002">
    <property type="entry name" value="enolase"/>
    <property type="match status" value="1"/>
</dbReference>
<dbReference type="SFLD" id="SFLDG00178">
    <property type="entry name" value="enolase"/>
    <property type="match status" value="1"/>
</dbReference>
<dbReference type="SMART" id="SM01192">
    <property type="entry name" value="Enolase_C"/>
    <property type="match status" value="1"/>
</dbReference>
<dbReference type="SMART" id="SM01193">
    <property type="entry name" value="Enolase_N"/>
    <property type="match status" value="1"/>
</dbReference>
<dbReference type="SUPFAM" id="SSF51604">
    <property type="entry name" value="Enolase C-terminal domain-like"/>
    <property type="match status" value="1"/>
</dbReference>
<dbReference type="SUPFAM" id="SSF54826">
    <property type="entry name" value="Enolase N-terminal domain-like"/>
    <property type="match status" value="1"/>
</dbReference>
<dbReference type="PROSITE" id="PS00164">
    <property type="entry name" value="ENOLASE"/>
    <property type="match status" value="1"/>
</dbReference>
<reference key="1">
    <citation type="journal article" date="2008" name="PLoS ONE">
        <title>Environmental adaptation: genomic analysis of the piezotolerant and psychrotolerant deep-sea iron reducing bacterium Shewanella piezotolerans WP3.</title>
        <authorList>
            <person name="Wang F."/>
            <person name="Wang J."/>
            <person name="Jian H."/>
            <person name="Zhang B."/>
            <person name="Li S."/>
            <person name="Wang F."/>
            <person name="Zeng X."/>
            <person name="Gao L."/>
            <person name="Bartlett D.H."/>
            <person name="Yu J."/>
            <person name="Hu S."/>
            <person name="Xiao X."/>
        </authorList>
    </citation>
    <scope>NUCLEOTIDE SEQUENCE [LARGE SCALE GENOMIC DNA]</scope>
    <source>
        <strain>WP3 / JCM 13877</strain>
    </source>
</reference>
<feature type="chain" id="PRO_1000119580" description="Enolase">
    <location>
        <begin position="1"/>
        <end position="433"/>
    </location>
</feature>
<feature type="active site" description="Proton donor" evidence="1">
    <location>
        <position position="209"/>
    </location>
</feature>
<feature type="active site" description="Proton acceptor" evidence="1">
    <location>
        <position position="343"/>
    </location>
</feature>
<feature type="binding site" evidence="1">
    <location>
        <position position="167"/>
    </location>
    <ligand>
        <name>(2R)-2-phosphoglycerate</name>
        <dbReference type="ChEBI" id="CHEBI:58289"/>
    </ligand>
</feature>
<feature type="binding site" evidence="1">
    <location>
        <position position="246"/>
    </location>
    <ligand>
        <name>Mg(2+)</name>
        <dbReference type="ChEBI" id="CHEBI:18420"/>
    </ligand>
</feature>
<feature type="binding site" evidence="1">
    <location>
        <position position="291"/>
    </location>
    <ligand>
        <name>Mg(2+)</name>
        <dbReference type="ChEBI" id="CHEBI:18420"/>
    </ligand>
</feature>
<feature type="binding site" evidence="1">
    <location>
        <position position="318"/>
    </location>
    <ligand>
        <name>Mg(2+)</name>
        <dbReference type="ChEBI" id="CHEBI:18420"/>
    </ligand>
</feature>
<feature type="binding site" evidence="1">
    <location>
        <position position="343"/>
    </location>
    <ligand>
        <name>(2R)-2-phosphoglycerate</name>
        <dbReference type="ChEBI" id="CHEBI:58289"/>
    </ligand>
</feature>
<feature type="binding site" evidence="1">
    <location>
        <position position="372"/>
    </location>
    <ligand>
        <name>(2R)-2-phosphoglycerate</name>
        <dbReference type="ChEBI" id="CHEBI:58289"/>
    </ligand>
</feature>
<feature type="binding site" evidence="1">
    <location>
        <position position="373"/>
    </location>
    <ligand>
        <name>(2R)-2-phosphoglycerate</name>
        <dbReference type="ChEBI" id="CHEBI:58289"/>
    </ligand>
</feature>
<feature type="binding site" evidence="1">
    <location>
        <position position="394"/>
    </location>
    <ligand>
        <name>(2R)-2-phosphoglycerate</name>
        <dbReference type="ChEBI" id="CHEBI:58289"/>
    </ligand>
</feature>
<gene>
    <name evidence="1" type="primary">eno</name>
    <name type="ordered locus">swp_1356</name>
</gene>
<proteinExistence type="inferred from homology"/>
<evidence type="ECO:0000255" key="1">
    <source>
        <dbReference type="HAMAP-Rule" id="MF_00318"/>
    </source>
</evidence>
<keyword id="KW-0963">Cytoplasm</keyword>
<keyword id="KW-0324">Glycolysis</keyword>
<keyword id="KW-0456">Lyase</keyword>
<keyword id="KW-0460">Magnesium</keyword>
<keyword id="KW-0479">Metal-binding</keyword>
<keyword id="KW-0964">Secreted</keyword>
<accession>B8CJP6</accession>
<comment type="function">
    <text evidence="1">Catalyzes the reversible conversion of 2-phosphoglycerate (2-PG) into phosphoenolpyruvate (PEP). It is essential for the degradation of carbohydrates via glycolysis.</text>
</comment>
<comment type="catalytic activity">
    <reaction evidence="1">
        <text>(2R)-2-phosphoglycerate = phosphoenolpyruvate + H2O</text>
        <dbReference type="Rhea" id="RHEA:10164"/>
        <dbReference type="ChEBI" id="CHEBI:15377"/>
        <dbReference type="ChEBI" id="CHEBI:58289"/>
        <dbReference type="ChEBI" id="CHEBI:58702"/>
        <dbReference type="EC" id="4.2.1.11"/>
    </reaction>
</comment>
<comment type="cofactor">
    <cofactor evidence="1">
        <name>Mg(2+)</name>
        <dbReference type="ChEBI" id="CHEBI:18420"/>
    </cofactor>
    <text evidence="1">Binds a second Mg(2+) ion via substrate during catalysis.</text>
</comment>
<comment type="pathway">
    <text evidence="1">Carbohydrate degradation; glycolysis; pyruvate from D-glyceraldehyde 3-phosphate: step 4/5.</text>
</comment>
<comment type="subunit">
    <text evidence="1">Component of the RNA degradosome, a multiprotein complex involved in RNA processing and mRNA degradation.</text>
</comment>
<comment type="subcellular location">
    <subcellularLocation>
        <location evidence="1">Cytoplasm</location>
    </subcellularLocation>
    <subcellularLocation>
        <location evidence="1">Secreted</location>
    </subcellularLocation>
    <subcellularLocation>
        <location evidence="1">Cell surface</location>
    </subcellularLocation>
    <text evidence="1">Fractions of enolase are present in both the cytoplasm and on the cell surface.</text>
</comment>
<comment type="similarity">
    <text evidence="1">Belongs to the enolase family.</text>
</comment>
<sequence length="433" mass="45787">MAKIINIIGREIMDSRGNPTVEAEVHLEGGFMGMAAAPSGASTGSREALELRDGDKARYLGKGVLKAVEAVNGTIADALIGKDATAQAELDQIMIDLDGTENKAKFGANAILAVSLAAAKAAAAFKGVPLYAHIADLNGTPGVYSMPLPMMNIINGGEHADNSVDIQEFMIQPVGAANFREGLRMGAEVFHSLAKVLKADGHSTAVGDEGGFAPNLPSNASALAAIKVAVANAGYELGKDITLAMDCAASEFYDKEANIYDLKGEGKKFTSEEFNFFLQDLTKEYPIVSIEDGLDESDWDGFAHQTKLMGDKIQLVGDDLFVTNTKILKRGIDNGIANSILIKFNQIGSLTETLAAIKMAKDAGFTVVISHRSGETEDATIADLAVGTAAGQIKTGSLSRSDRVAKYNQLLRIEEQLGEKAPYKGLKEVKGQA</sequence>